<feature type="initiator methionine" description="Removed" evidence="2">
    <location>
        <position position="1"/>
    </location>
</feature>
<feature type="chain" id="PRO_0000139399" description="3-mercaptopyruvate sulfurtransferase">
    <location>
        <begin position="2"/>
        <end position="297"/>
    </location>
</feature>
<feature type="domain" description="Rhodanese 1" evidence="4">
    <location>
        <begin position="25"/>
        <end position="144"/>
    </location>
</feature>
<feature type="domain" description="Rhodanese 2" evidence="4">
    <location>
        <begin position="174"/>
        <end position="288"/>
    </location>
</feature>
<feature type="region of interest" description="Hinge">
    <location>
        <begin position="145"/>
        <end position="160"/>
    </location>
</feature>
<feature type="active site" description="Cysteine persulfide intermediate" evidence="4 5 8">
    <location>
        <position position="248"/>
    </location>
</feature>
<feature type="binding site" evidence="1">
    <location>
        <position position="188"/>
    </location>
    <ligand>
        <name>substrate</name>
    </ligand>
</feature>
<feature type="modified residue" description="N-acetylalanine" evidence="2">
    <location>
        <position position="2"/>
    </location>
</feature>
<feature type="modified residue" description="Phosphoserine" evidence="2">
    <location>
        <position position="35"/>
    </location>
</feature>
<feature type="modified residue" description="N6-acetyllysine; alternate" evidence="13">
    <location>
        <position position="40"/>
    </location>
</feature>
<feature type="modified residue" description="N6-succinyllysine; alternate" evidence="14">
    <location>
        <position position="40"/>
    </location>
</feature>
<feature type="modified residue" description="N6-succinyllysine" evidence="14">
    <location>
        <position position="146"/>
    </location>
</feature>
<feature type="modified residue" description="N6-succinyllysine" evidence="14">
    <location>
        <position position="164"/>
    </location>
</feature>
<feature type="disulfide bond" description="Interchain (with C-264); redox-active" evidence="1">
    <location>
        <position position="264"/>
    </location>
</feature>
<feature type="mutagenesis site" description="Abolishes hydrogen sulfide production. Slightly increased basal levels of bound persulfide." evidence="5">
    <original>R</original>
    <variation>G</variation>
    <location>
        <position position="188"/>
    </location>
</feature>
<feature type="mutagenesis site" description="Reduces hydrogen sulfide production by 50%. No change in basal levels of bound persulfide." evidence="5">
    <original>R</original>
    <variation>G</variation>
    <location>
        <position position="197"/>
    </location>
</feature>
<feature type="mutagenesis site" description="Loss of redox potential. Abolishes bound persulfide and hydrogen sulfide production." evidence="5">
    <original>C</original>
    <variation>S</variation>
    <location>
        <position position="248"/>
    </location>
</feature>
<feature type="sequence conflict" description="In Ref. 3; EDL29674 and 4; AAH04079/AAH94469." ref="3 4">
    <original>D</original>
    <variation>G</variation>
    <location>
        <position position="102"/>
    </location>
</feature>
<feature type="sequence conflict" description="In Ref. 4; AAH04079." ref="4">
    <original>L</original>
    <variation>P</variation>
    <location>
        <position position="107"/>
    </location>
</feature>
<feature type="strand" evidence="15">
    <location>
        <begin position="9"/>
        <end position="11"/>
    </location>
</feature>
<feature type="helix" evidence="15">
    <location>
        <begin position="13"/>
        <end position="21"/>
    </location>
</feature>
<feature type="strand" evidence="15">
    <location>
        <begin position="29"/>
        <end position="33"/>
    </location>
</feature>
<feature type="helix" evidence="15">
    <location>
        <begin position="39"/>
        <end position="41"/>
    </location>
</feature>
<feature type="helix" evidence="15">
    <location>
        <begin position="45"/>
        <end position="51"/>
    </location>
</feature>
<feature type="helix" evidence="15">
    <location>
        <begin position="62"/>
        <end position="64"/>
    </location>
</feature>
<feature type="strand" evidence="15">
    <location>
        <begin position="70"/>
        <end position="74"/>
    </location>
</feature>
<feature type="helix" evidence="15">
    <location>
        <begin position="79"/>
        <end position="88"/>
    </location>
</feature>
<feature type="strand" evidence="15">
    <location>
        <begin position="96"/>
        <end position="100"/>
    </location>
</feature>
<feature type="helix" evidence="15">
    <location>
        <begin position="110"/>
        <end position="119"/>
    </location>
</feature>
<feature type="strand" evidence="15">
    <location>
        <begin position="125"/>
        <end position="128"/>
    </location>
</feature>
<feature type="helix" evidence="15">
    <location>
        <begin position="131"/>
        <end position="137"/>
    </location>
</feature>
<feature type="helix" evidence="15">
    <location>
        <begin position="160"/>
        <end position="162"/>
    </location>
</feature>
<feature type="helix" evidence="15">
    <location>
        <begin position="166"/>
        <end position="175"/>
    </location>
</feature>
<feature type="strand" evidence="15">
    <location>
        <begin position="178"/>
        <end position="182"/>
    </location>
</feature>
<feature type="helix" evidence="15">
    <location>
        <begin position="186"/>
        <end position="190"/>
    </location>
</feature>
<feature type="helix" evidence="15">
    <location>
        <begin position="213"/>
        <end position="216"/>
    </location>
</feature>
<feature type="helix" evidence="15">
    <location>
        <begin position="226"/>
        <end position="235"/>
    </location>
</feature>
<feature type="strand" evidence="15">
    <location>
        <begin position="244"/>
        <end position="247"/>
    </location>
</feature>
<feature type="strand" evidence="15">
    <location>
        <begin position="249"/>
        <end position="252"/>
    </location>
</feature>
<feature type="helix" evidence="15">
    <location>
        <begin position="254"/>
        <end position="263"/>
    </location>
</feature>
<feature type="strand" evidence="15">
    <location>
        <begin position="271"/>
        <end position="274"/>
    </location>
</feature>
<feature type="helix" evidence="15">
    <location>
        <begin position="275"/>
        <end position="282"/>
    </location>
</feature>
<feature type="helix" evidence="15">
    <location>
        <begin position="285"/>
        <end position="287"/>
    </location>
</feature>
<accession>Q99J99</accession>
<accession>Q3UW66</accession>
<accession>Q505N7</accession>
<protein>
    <recommendedName>
        <fullName>3-mercaptopyruvate sulfurtransferase</fullName>
        <shortName>MST</shortName>
        <ecNumber evidence="5 8">2.8.1.2</ecNumber>
    </recommendedName>
</protein>
<comment type="function">
    <text evidence="5 6 7 8">Transfer of a sulfur ion to cyanide or to other thiol compounds. Also has weak rhodanese activity. Detoxifies cyanide and is required for thiosulfate biosynthesis. Acts as an antioxidant. In combination with cysteine aminotransferase (CAT), contributes to the catabolism of cysteine and is an important producer of hydrogen sulfide in the brain, retina and vascular endothelial cells. Hydrogen sulfide H(2)S is an important synaptic modulator, signaling molecule, smooth muscle contractor and neuroprotectant. Its production by the 3MST/CAT pathway is regulated by calcium ions.</text>
</comment>
<comment type="catalytic activity">
    <reaction evidence="5 8">
        <text>2-oxo-3-sulfanylpropanoate + [thioredoxin]-dithiol = [thioredoxin]-disulfide + hydrogen sulfide + pyruvate + H(+)</text>
        <dbReference type="Rhea" id="RHEA:21740"/>
        <dbReference type="Rhea" id="RHEA-COMP:10698"/>
        <dbReference type="Rhea" id="RHEA-COMP:10700"/>
        <dbReference type="ChEBI" id="CHEBI:15361"/>
        <dbReference type="ChEBI" id="CHEBI:15378"/>
        <dbReference type="ChEBI" id="CHEBI:29919"/>
        <dbReference type="ChEBI" id="CHEBI:29950"/>
        <dbReference type="ChEBI" id="CHEBI:50058"/>
        <dbReference type="ChEBI" id="CHEBI:57678"/>
        <dbReference type="EC" id="2.8.1.2"/>
    </reaction>
</comment>
<comment type="activity regulation">
    <text evidence="3">By oxidative stress, and thioredoxin. Under oxidative stress conditions, the catalytic cysteine site is converted to a sulfenate which inhibits the MPST enzyme activity. Reduced thioredoxin cleaves an intersubunit disulfide bond to turn on the redox switch and reactivate the enzyme. Inhibited by different oxidants, hydrogen peroxide and tetrathionate.</text>
</comment>
<comment type="subunit">
    <text evidence="3">Monomer (active form). Homodimer; disulfide-linked (inactive form).</text>
</comment>
<comment type="subcellular location">
    <subcellularLocation>
        <location evidence="3">Cytoplasm</location>
    </subcellularLocation>
    <subcellularLocation>
        <location evidence="5">Mitochondrion</location>
    </subcellularLocation>
    <subcellularLocation>
        <location evidence="5">Synapse</location>
        <location evidence="5">Synaptosome</location>
    </subcellularLocation>
</comment>
<comment type="tissue specificity">
    <text evidence="5 6 7">Expressed in the brain and retina. In the retina, localized to the inner and outer plexiform layer, the inner and outer nuclear layer and the outer segments of photoreceptors. In the brain, localized to neurons of mitral cell layers, glomerular, and external plexiform layers in the olfactory bulb. Also found in Purkinje cell stomata and proximal dendrites. In the spinal cord, localized to large neurons. In the cerebral cortex, localized to pyramidial neurons in layers II/III and V, and in layers I-VI of neocortical areas. In the hippocampus, found in CA1 and CA3 pyramidal cells.</text>
</comment>
<comment type="developmental stage">
    <text evidence="5">In the developing brain, maintained expression from 16 dpc to postnatal day 14. Levels decrease between postnatal day 28 and postnatal day 52 and increase again with further aging up to 156 days old.</text>
</comment>
<comment type="domain">
    <text evidence="1">Contains two rhodanese domains with different primary structures but with near identical secondary structure conformations suggesting a common evolutionary origin. Only the C-terminal rhodanese domain contains the catalytic cysteine residue (By similarity).</text>
</comment>
<comment type="miscellaneous">
    <text evidence="9">Thioredoxin (Trx) or dihydrolipoic acid (DHLA) are required to release hydrogen sulfide from the persulfide intermediate.</text>
</comment>
<name>THTM_MOUSE</name>
<keyword id="KW-0002">3D-structure</keyword>
<keyword id="KW-0007">Acetylation</keyword>
<keyword id="KW-0963">Cytoplasm</keyword>
<keyword id="KW-0903">Direct protein sequencing</keyword>
<keyword id="KW-1015">Disulfide bond</keyword>
<keyword id="KW-0496">Mitochondrion</keyword>
<keyword id="KW-0597">Phosphoprotein</keyword>
<keyword id="KW-0676">Redox-active center</keyword>
<keyword id="KW-1185">Reference proteome</keyword>
<keyword id="KW-0677">Repeat</keyword>
<keyword id="KW-0770">Synapse</keyword>
<keyword id="KW-0771">Synaptosome</keyword>
<keyword id="KW-0808">Transferase</keyword>
<evidence type="ECO:0000250" key="1"/>
<evidence type="ECO:0000250" key="2">
    <source>
        <dbReference type="UniProtKB" id="P25325"/>
    </source>
</evidence>
<evidence type="ECO:0000250" key="3">
    <source>
        <dbReference type="UniProtKB" id="P97532"/>
    </source>
</evidence>
<evidence type="ECO:0000255" key="4">
    <source>
        <dbReference type="PROSITE-ProRule" id="PRU00173"/>
    </source>
</evidence>
<evidence type="ECO:0000269" key="5">
    <source>
    </source>
</evidence>
<evidence type="ECO:0000269" key="6">
    <source>
    </source>
</evidence>
<evidence type="ECO:0000269" key="7">
    <source>
    </source>
</evidence>
<evidence type="ECO:0000269" key="8">
    <source>
    </source>
</evidence>
<evidence type="ECO:0000305" key="9">
    <source>
    </source>
</evidence>
<evidence type="ECO:0000312" key="10">
    <source>
        <dbReference type="EMBL" id="BAE23053.1"/>
    </source>
</evidence>
<evidence type="ECO:0007744" key="11">
    <source>
        <dbReference type="PDB" id="5WQJ"/>
    </source>
</evidence>
<evidence type="ECO:0007744" key="12">
    <source>
        <dbReference type="PDB" id="5WQK"/>
    </source>
</evidence>
<evidence type="ECO:0007744" key="13">
    <source>
    </source>
</evidence>
<evidence type="ECO:0007744" key="14">
    <source>
    </source>
</evidence>
<evidence type="ECO:0007829" key="15">
    <source>
        <dbReference type="PDB" id="5WQJ"/>
    </source>
</evidence>
<dbReference type="EC" id="2.8.1.2" evidence="5 8"/>
<dbReference type="EMBL" id="AK136571">
    <property type="protein sequence ID" value="BAE23053.1"/>
    <property type="molecule type" value="mRNA"/>
</dbReference>
<dbReference type="EMBL" id="AL583893">
    <property type="status" value="NOT_ANNOTATED_CDS"/>
    <property type="molecule type" value="Genomic_DNA"/>
</dbReference>
<dbReference type="EMBL" id="AL590144">
    <property type="status" value="NOT_ANNOTATED_CDS"/>
    <property type="molecule type" value="Genomic_DNA"/>
</dbReference>
<dbReference type="EMBL" id="CH466545">
    <property type="protein sequence ID" value="EDL29674.1"/>
    <property type="molecule type" value="Genomic_DNA"/>
</dbReference>
<dbReference type="EMBL" id="BC004079">
    <property type="protein sequence ID" value="AAH04079.1"/>
    <property type="molecule type" value="mRNA"/>
</dbReference>
<dbReference type="EMBL" id="BC094469">
    <property type="protein sequence ID" value="AAH94469.1"/>
    <property type="molecule type" value="mRNA"/>
</dbReference>
<dbReference type="CCDS" id="CCDS27615.1"/>
<dbReference type="RefSeq" id="NP_001155964.1">
    <property type="nucleotide sequence ID" value="NM_001162492.2"/>
</dbReference>
<dbReference type="RefSeq" id="NP_001155965.1">
    <property type="nucleotide sequence ID" value="NM_001162493.2"/>
</dbReference>
<dbReference type="RefSeq" id="NP_001402986.1">
    <property type="nucleotide sequence ID" value="NM_001416057.1"/>
</dbReference>
<dbReference type="RefSeq" id="NP_001402987.1">
    <property type="nucleotide sequence ID" value="NM_001416058.1"/>
</dbReference>
<dbReference type="RefSeq" id="NP_001402988.1">
    <property type="nucleotide sequence ID" value="NM_001416059.1"/>
</dbReference>
<dbReference type="RefSeq" id="NP_001402989.1">
    <property type="nucleotide sequence ID" value="NM_001416060.1"/>
</dbReference>
<dbReference type="RefSeq" id="NP_001402990.1">
    <property type="nucleotide sequence ID" value="NM_001416061.1"/>
</dbReference>
<dbReference type="RefSeq" id="NP_619611.3">
    <property type="nucleotide sequence ID" value="NM_138670.4"/>
</dbReference>
<dbReference type="RefSeq" id="XP_006521057.1">
    <property type="nucleotide sequence ID" value="XM_006520994.3"/>
</dbReference>
<dbReference type="RefSeq" id="XP_006521058.1">
    <property type="nucleotide sequence ID" value="XM_006520995.2"/>
</dbReference>
<dbReference type="RefSeq" id="XP_006521059.1">
    <property type="nucleotide sequence ID" value="XM_006520996.3"/>
</dbReference>
<dbReference type="PDB" id="5WQJ">
    <property type="method" value="X-ray"/>
    <property type="resolution" value="1.20 A"/>
    <property type="chains" value="A/B=1-297"/>
</dbReference>
<dbReference type="PDB" id="5WQK">
    <property type="method" value="X-ray"/>
    <property type="resolution" value="1.70 A"/>
    <property type="chains" value="A/B=5-297"/>
</dbReference>
<dbReference type="PDBsum" id="5WQJ"/>
<dbReference type="PDBsum" id="5WQK"/>
<dbReference type="SMR" id="Q99J99"/>
<dbReference type="FunCoup" id="Q99J99">
    <property type="interactions" value="1635"/>
</dbReference>
<dbReference type="IntAct" id="Q99J99">
    <property type="interactions" value="1"/>
</dbReference>
<dbReference type="MINT" id="Q99J99"/>
<dbReference type="STRING" id="10090.ENSMUSP00000043061"/>
<dbReference type="GlyGen" id="Q99J99">
    <property type="glycosylation" value="1 site, 1 O-linked glycan (1 site)"/>
</dbReference>
<dbReference type="iPTMnet" id="Q99J99"/>
<dbReference type="PhosphoSitePlus" id="Q99J99"/>
<dbReference type="SwissPalm" id="Q99J99"/>
<dbReference type="REPRODUCTION-2DPAGE" id="IPI00114957"/>
<dbReference type="REPRODUCTION-2DPAGE" id="Q99J99"/>
<dbReference type="jPOST" id="Q99J99"/>
<dbReference type="PaxDb" id="10090-ENSMUSP00000043061"/>
<dbReference type="ProteomicsDB" id="262820"/>
<dbReference type="ProteomicsDB" id="342690"/>
<dbReference type="Pumba" id="Q99J99"/>
<dbReference type="Antibodypedia" id="223">
    <property type="antibodies" value="152 antibodies from 25 providers"/>
</dbReference>
<dbReference type="DNASU" id="246221"/>
<dbReference type="Ensembl" id="ENSMUST00000043865.8">
    <property type="protein sequence ID" value="ENSMUSP00000043061.7"/>
    <property type="gene ID" value="ENSMUSG00000071711.13"/>
</dbReference>
<dbReference type="Ensembl" id="ENSMUST00000167140.8">
    <property type="protein sequence ID" value="ENSMUSP00000130493.2"/>
    <property type="gene ID" value="ENSMUSG00000071711.13"/>
</dbReference>
<dbReference type="Ensembl" id="ENSMUST00000169133.8">
    <property type="protein sequence ID" value="ENSMUSP00000128075.2"/>
    <property type="gene ID" value="ENSMUSG00000071711.13"/>
</dbReference>
<dbReference type="Ensembl" id="ENSMUST00000229739.2">
    <property type="protein sequence ID" value="ENSMUSP00000155371.2"/>
    <property type="gene ID" value="ENSMUSG00000071711.13"/>
</dbReference>
<dbReference type="GeneID" id="246221"/>
<dbReference type="KEGG" id="mmu:246221"/>
<dbReference type="UCSC" id="uc007wpe.2">
    <property type="organism name" value="mouse"/>
</dbReference>
<dbReference type="AGR" id="MGI:2179733"/>
<dbReference type="CTD" id="4357"/>
<dbReference type="MGI" id="MGI:2179733">
    <property type="gene designation" value="Mpst"/>
</dbReference>
<dbReference type="VEuPathDB" id="HostDB:ENSMUSG00000071711"/>
<dbReference type="eggNOG" id="KOG1529">
    <property type="taxonomic scope" value="Eukaryota"/>
</dbReference>
<dbReference type="GeneTree" id="ENSGT00510000046773"/>
<dbReference type="InParanoid" id="Q99J99"/>
<dbReference type="OMA" id="NNNWFAS"/>
<dbReference type="OrthoDB" id="270167at2759"/>
<dbReference type="PhylomeDB" id="Q99J99"/>
<dbReference type="TreeFam" id="TF315133"/>
<dbReference type="BRENDA" id="2.8.1.2">
    <property type="organism ID" value="3474"/>
</dbReference>
<dbReference type="Reactome" id="R-MMU-1614558">
    <property type="pathway name" value="Degradation of cysteine and homocysteine"/>
</dbReference>
<dbReference type="BioGRID-ORCS" id="246221">
    <property type="hits" value="0 hits in 76 CRISPR screens"/>
</dbReference>
<dbReference type="ChiTaRS" id="Mpst">
    <property type="organism name" value="mouse"/>
</dbReference>
<dbReference type="PRO" id="PR:Q99J99"/>
<dbReference type="Proteomes" id="UP000000589">
    <property type="component" value="Chromosome 15"/>
</dbReference>
<dbReference type="RNAct" id="Q99J99">
    <property type="molecule type" value="protein"/>
</dbReference>
<dbReference type="Bgee" id="ENSMUSG00000071711">
    <property type="expression patterns" value="Expressed in hindlimb stylopod muscle and 166 other cell types or tissues"/>
</dbReference>
<dbReference type="ExpressionAtlas" id="Q99J99">
    <property type="expression patterns" value="baseline and differential"/>
</dbReference>
<dbReference type="GO" id="GO:0005737">
    <property type="term" value="C:cytoplasm"/>
    <property type="evidence" value="ECO:0000250"/>
    <property type="project" value="UniProtKB"/>
</dbReference>
<dbReference type="GO" id="GO:0005743">
    <property type="term" value="C:mitochondrial inner membrane"/>
    <property type="evidence" value="ECO:0007005"/>
    <property type="project" value="MGI"/>
</dbReference>
<dbReference type="GO" id="GO:0005739">
    <property type="term" value="C:mitochondrion"/>
    <property type="evidence" value="ECO:0007005"/>
    <property type="project" value="MGI"/>
</dbReference>
<dbReference type="GO" id="GO:0043005">
    <property type="term" value="C:neuron projection"/>
    <property type="evidence" value="ECO:0000314"/>
    <property type="project" value="UniProtKB"/>
</dbReference>
<dbReference type="GO" id="GO:0045202">
    <property type="term" value="C:synapse"/>
    <property type="evidence" value="ECO:0007669"/>
    <property type="project" value="UniProtKB-SubCell"/>
</dbReference>
<dbReference type="GO" id="GO:0016784">
    <property type="term" value="F:3-mercaptopyruvate sulfurtransferase activity"/>
    <property type="evidence" value="ECO:0000314"/>
    <property type="project" value="UniProtKB"/>
</dbReference>
<dbReference type="GO" id="GO:0042802">
    <property type="term" value="F:identical protein binding"/>
    <property type="evidence" value="ECO:0007669"/>
    <property type="project" value="Ensembl"/>
</dbReference>
<dbReference type="GO" id="GO:0004792">
    <property type="term" value="F:thiosulfate-cyanide sulfurtransferase activity"/>
    <property type="evidence" value="ECO:0007669"/>
    <property type="project" value="Ensembl"/>
</dbReference>
<dbReference type="GO" id="GO:0070814">
    <property type="term" value="P:hydrogen sulfide biosynthetic process"/>
    <property type="evidence" value="ECO:0000314"/>
    <property type="project" value="UniProtKB"/>
</dbReference>
<dbReference type="GO" id="GO:0001822">
    <property type="term" value="P:kidney development"/>
    <property type="evidence" value="ECO:0007669"/>
    <property type="project" value="Ensembl"/>
</dbReference>
<dbReference type="GO" id="GO:0001889">
    <property type="term" value="P:liver development"/>
    <property type="evidence" value="ECO:0007669"/>
    <property type="project" value="Ensembl"/>
</dbReference>
<dbReference type="GO" id="GO:0021510">
    <property type="term" value="P:spinal cord development"/>
    <property type="evidence" value="ECO:0007669"/>
    <property type="project" value="Ensembl"/>
</dbReference>
<dbReference type="GO" id="GO:0019346">
    <property type="term" value="P:transsulfuration"/>
    <property type="evidence" value="ECO:0007669"/>
    <property type="project" value="Ensembl"/>
</dbReference>
<dbReference type="CDD" id="cd01448">
    <property type="entry name" value="TST_Repeat_1"/>
    <property type="match status" value="1"/>
</dbReference>
<dbReference type="CDD" id="cd01449">
    <property type="entry name" value="TST_Repeat_2"/>
    <property type="match status" value="1"/>
</dbReference>
<dbReference type="FunFam" id="3.40.250.10:FF:000001">
    <property type="entry name" value="Sulfurtransferase"/>
    <property type="match status" value="1"/>
</dbReference>
<dbReference type="FunFam" id="3.40.250.10:FF:000008">
    <property type="entry name" value="Sulfurtransferase"/>
    <property type="match status" value="1"/>
</dbReference>
<dbReference type="Gene3D" id="3.40.250.10">
    <property type="entry name" value="Rhodanese-like domain"/>
    <property type="match status" value="2"/>
</dbReference>
<dbReference type="InterPro" id="IPR001763">
    <property type="entry name" value="Rhodanese-like_dom"/>
</dbReference>
<dbReference type="InterPro" id="IPR036873">
    <property type="entry name" value="Rhodanese-like_dom_sf"/>
</dbReference>
<dbReference type="InterPro" id="IPR001307">
    <property type="entry name" value="Thiosulphate_STrfase_CS"/>
</dbReference>
<dbReference type="InterPro" id="IPR045078">
    <property type="entry name" value="TST/MPST-like"/>
</dbReference>
<dbReference type="NCBIfam" id="NF008557">
    <property type="entry name" value="PRK11493.1"/>
    <property type="match status" value="1"/>
</dbReference>
<dbReference type="PANTHER" id="PTHR11364:SF25">
    <property type="entry name" value="3-MERCAPTOPYRUVATE SULFURTRANSFERASE"/>
    <property type="match status" value="1"/>
</dbReference>
<dbReference type="PANTHER" id="PTHR11364">
    <property type="entry name" value="THIOSULFATE SULFERTANSFERASE"/>
    <property type="match status" value="1"/>
</dbReference>
<dbReference type="Pfam" id="PF00581">
    <property type="entry name" value="Rhodanese"/>
    <property type="match status" value="2"/>
</dbReference>
<dbReference type="SMART" id="SM00450">
    <property type="entry name" value="RHOD"/>
    <property type="match status" value="2"/>
</dbReference>
<dbReference type="SUPFAM" id="SSF52821">
    <property type="entry name" value="Rhodanese/Cell cycle control phosphatase"/>
    <property type="match status" value="2"/>
</dbReference>
<dbReference type="PROSITE" id="PS00380">
    <property type="entry name" value="RHODANESE_1"/>
    <property type="match status" value="1"/>
</dbReference>
<dbReference type="PROSITE" id="PS00683">
    <property type="entry name" value="RHODANESE_2"/>
    <property type="match status" value="1"/>
</dbReference>
<dbReference type="PROSITE" id="PS50206">
    <property type="entry name" value="RHODANESE_3"/>
    <property type="match status" value="2"/>
</dbReference>
<sequence>MAAPQLFRALVSAQWVAEALKAPRSSQPLKLLDASWYLPKLGRDARREFEERHIPGAAFFDIDRCSDHTSPYDHMLPNATHFADYAGSLGVSAATHVVIYDDSDQGLYSAPRVWWMFRAFGHHSVSLLDGGFRHWLNQNLPISSGKSHSEPAEFSAQLDPSFIKTHEDILENLDARRFQVVDARAAGRFQGTQPEPRDGIEPGHIPGSVNIPFTEFLTNEGLEKSPEEIKRLFKEKKVDLSKPLVATCGSGVTACHVVLGAFLCGKSDVPVYDGSWVEWYMRAQPEHIISEGRGKTQ</sequence>
<organism>
    <name type="scientific">Mus musculus</name>
    <name type="common">Mouse</name>
    <dbReference type="NCBI Taxonomy" id="10090"/>
    <lineage>
        <taxon>Eukaryota</taxon>
        <taxon>Metazoa</taxon>
        <taxon>Chordata</taxon>
        <taxon>Craniata</taxon>
        <taxon>Vertebrata</taxon>
        <taxon>Euteleostomi</taxon>
        <taxon>Mammalia</taxon>
        <taxon>Eutheria</taxon>
        <taxon>Euarchontoglires</taxon>
        <taxon>Glires</taxon>
        <taxon>Rodentia</taxon>
        <taxon>Myomorpha</taxon>
        <taxon>Muroidea</taxon>
        <taxon>Muridae</taxon>
        <taxon>Murinae</taxon>
        <taxon>Mus</taxon>
        <taxon>Mus</taxon>
    </lineage>
</organism>
<gene>
    <name type="primary">Mpst</name>
</gene>
<reference key="1">
    <citation type="journal article" date="2005" name="Science">
        <title>The transcriptional landscape of the mammalian genome.</title>
        <authorList>
            <person name="Carninci P."/>
            <person name="Kasukawa T."/>
            <person name="Katayama S."/>
            <person name="Gough J."/>
            <person name="Frith M.C."/>
            <person name="Maeda N."/>
            <person name="Oyama R."/>
            <person name="Ravasi T."/>
            <person name="Lenhard B."/>
            <person name="Wells C."/>
            <person name="Kodzius R."/>
            <person name="Shimokawa K."/>
            <person name="Bajic V.B."/>
            <person name="Brenner S.E."/>
            <person name="Batalov S."/>
            <person name="Forrest A.R."/>
            <person name="Zavolan M."/>
            <person name="Davis M.J."/>
            <person name="Wilming L.G."/>
            <person name="Aidinis V."/>
            <person name="Allen J.E."/>
            <person name="Ambesi-Impiombato A."/>
            <person name="Apweiler R."/>
            <person name="Aturaliya R.N."/>
            <person name="Bailey T.L."/>
            <person name="Bansal M."/>
            <person name="Baxter L."/>
            <person name="Beisel K.W."/>
            <person name="Bersano T."/>
            <person name="Bono H."/>
            <person name="Chalk A.M."/>
            <person name="Chiu K.P."/>
            <person name="Choudhary V."/>
            <person name="Christoffels A."/>
            <person name="Clutterbuck D.R."/>
            <person name="Crowe M.L."/>
            <person name="Dalla E."/>
            <person name="Dalrymple B.P."/>
            <person name="de Bono B."/>
            <person name="Della Gatta G."/>
            <person name="di Bernardo D."/>
            <person name="Down T."/>
            <person name="Engstrom P."/>
            <person name="Fagiolini M."/>
            <person name="Faulkner G."/>
            <person name="Fletcher C.F."/>
            <person name="Fukushima T."/>
            <person name="Furuno M."/>
            <person name="Futaki S."/>
            <person name="Gariboldi M."/>
            <person name="Georgii-Hemming P."/>
            <person name="Gingeras T.R."/>
            <person name="Gojobori T."/>
            <person name="Green R.E."/>
            <person name="Gustincich S."/>
            <person name="Harbers M."/>
            <person name="Hayashi Y."/>
            <person name="Hensch T.K."/>
            <person name="Hirokawa N."/>
            <person name="Hill D."/>
            <person name="Huminiecki L."/>
            <person name="Iacono M."/>
            <person name="Ikeo K."/>
            <person name="Iwama A."/>
            <person name="Ishikawa T."/>
            <person name="Jakt M."/>
            <person name="Kanapin A."/>
            <person name="Katoh M."/>
            <person name="Kawasawa Y."/>
            <person name="Kelso J."/>
            <person name="Kitamura H."/>
            <person name="Kitano H."/>
            <person name="Kollias G."/>
            <person name="Krishnan S.P."/>
            <person name="Kruger A."/>
            <person name="Kummerfeld S.K."/>
            <person name="Kurochkin I.V."/>
            <person name="Lareau L.F."/>
            <person name="Lazarevic D."/>
            <person name="Lipovich L."/>
            <person name="Liu J."/>
            <person name="Liuni S."/>
            <person name="McWilliam S."/>
            <person name="Madan Babu M."/>
            <person name="Madera M."/>
            <person name="Marchionni L."/>
            <person name="Matsuda H."/>
            <person name="Matsuzawa S."/>
            <person name="Miki H."/>
            <person name="Mignone F."/>
            <person name="Miyake S."/>
            <person name="Morris K."/>
            <person name="Mottagui-Tabar S."/>
            <person name="Mulder N."/>
            <person name="Nakano N."/>
            <person name="Nakauchi H."/>
            <person name="Ng P."/>
            <person name="Nilsson R."/>
            <person name="Nishiguchi S."/>
            <person name="Nishikawa S."/>
            <person name="Nori F."/>
            <person name="Ohara O."/>
            <person name="Okazaki Y."/>
            <person name="Orlando V."/>
            <person name="Pang K.C."/>
            <person name="Pavan W.J."/>
            <person name="Pavesi G."/>
            <person name="Pesole G."/>
            <person name="Petrovsky N."/>
            <person name="Piazza S."/>
            <person name="Reed J."/>
            <person name="Reid J.F."/>
            <person name="Ring B.Z."/>
            <person name="Ringwald M."/>
            <person name="Rost B."/>
            <person name="Ruan Y."/>
            <person name="Salzberg S.L."/>
            <person name="Sandelin A."/>
            <person name="Schneider C."/>
            <person name="Schoenbach C."/>
            <person name="Sekiguchi K."/>
            <person name="Semple C.A."/>
            <person name="Seno S."/>
            <person name="Sessa L."/>
            <person name="Sheng Y."/>
            <person name="Shibata Y."/>
            <person name="Shimada H."/>
            <person name="Shimada K."/>
            <person name="Silva D."/>
            <person name="Sinclair B."/>
            <person name="Sperling S."/>
            <person name="Stupka E."/>
            <person name="Sugiura K."/>
            <person name="Sultana R."/>
            <person name="Takenaka Y."/>
            <person name="Taki K."/>
            <person name="Tammoja K."/>
            <person name="Tan S.L."/>
            <person name="Tang S."/>
            <person name="Taylor M.S."/>
            <person name="Tegner J."/>
            <person name="Teichmann S.A."/>
            <person name="Ueda H.R."/>
            <person name="van Nimwegen E."/>
            <person name="Verardo R."/>
            <person name="Wei C.L."/>
            <person name="Yagi K."/>
            <person name="Yamanishi H."/>
            <person name="Zabarovsky E."/>
            <person name="Zhu S."/>
            <person name="Zimmer A."/>
            <person name="Hide W."/>
            <person name="Bult C."/>
            <person name="Grimmond S.M."/>
            <person name="Teasdale R.D."/>
            <person name="Liu E.T."/>
            <person name="Brusic V."/>
            <person name="Quackenbush J."/>
            <person name="Wahlestedt C."/>
            <person name="Mattick J.S."/>
            <person name="Hume D.A."/>
            <person name="Kai C."/>
            <person name="Sasaki D."/>
            <person name="Tomaru Y."/>
            <person name="Fukuda S."/>
            <person name="Kanamori-Katayama M."/>
            <person name="Suzuki M."/>
            <person name="Aoki J."/>
            <person name="Arakawa T."/>
            <person name="Iida J."/>
            <person name="Imamura K."/>
            <person name="Itoh M."/>
            <person name="Kato T."/>
            <person name="Kawaji H."/>
            <person name="Kawagashira N."/>
            <person name="Kawashima T."/>
            <person name="Kojima M."/>
            <person name="Kondo S."/>
            <person name="Konno H."/>
            <person name="Nakano K."/>
            <person name="Ninomiya N."/>
            <person name="Nishio T."/>
            <person name="Okada M."/>
            <person name="Plessy C."/>
            <person name="Shibata K."/>
            <person name="Shiraki T."/>
            <person name="Suzuki S."/>
            <person name="Tagami M."/>
            <person name="Waki K."/>
            <person name="Watahiki A."/>
            <person name="Okamura-Oho Y."/>
            <person name="Suzuki H."/>
            <person name="Kawai J."/>
            <person name="Hayashizaki Y."/>
        </authorList>
    </citation>
    <scope>NUCLEOTIDE SEQUENCE [LARGE SCALE MRNA]</scope>
    <source>
        <strain evidence="10">C57BL/6J</strain>
        <tissue evidence="10">Cecum</tissue>
    </source>
</reference>
<reference key="2">
    <citation type="journal article" date="2009" name="PLoS Biol.">
        <title>Lineage-specific biology revealed by a finished genome assembly of the mouse.</title>
        <authorList>
            <person name="Church D.M."/>
            <person name="Goodstadt L."/>
            <person name="Hillier L.W."/>
            <person name="Zody M.C."/>
            <person name="Goldstein S."/>
            <person name="She X."/>
            <person name="Bult C.J."/>
            <person name="Agarwala R."/>
            <person name="Cherry J.L."/>
            <person name="DiCuccio M."/>
            <person name="Hlavina W."/>
            <person name="Kapustin Y."/>
            <person name="Meric P."/>
            <person name="Maglott D."/>
            <person name="Birtle Z."/>
            <person name="Marques A.C."/>
            <person name="Graves T."/>
            <person name="Zhou S."/>
            <person name="Teague B."/>
            <person name="Potamousis K."/>
            <person name="Churas C."/>
            <person name="Place M."/>
            <person name="Herschleb J."/>
            <person name="Runnheim R."/>
            <person name="Forrest D."/>
            <person name="Amos-Landgraf J."/>
            <person name="Schwartz D.C."/>
            <person name="Cheng Z."/>
            <person name="Lindblad-Toh K."/>
            <person name="Eichler E.E."/>
            <person name="Ponting C.P."/>
        </authorList>
    </citation>
    <scope>NUCLEOTIDE SEQUENCE [LARGE SCALE GENOMIC DNA]</scope>
    <source>
        <strain>C57BL/6J</strain>
    </source>
</reference>
<reference key="3">
    <citation type="submission" date="2005-07" db="EMBL/GenBank/DDBJ databases">
        <authorList>
            <person name="Mural R.J."/>
            <person name="Adams M.D."/>
            <person name="Myers E.W."/>
            <person name="Smith H.O."/>
            <person name="Venter J.C."/>
        </authorList>
    </citation>
    <scope>NUCLEOTIDE SEQUENCE [LARGE SCALE GENOMIC DNA]</scope>
</reference>
<reference key="4">
    <citation type="journal article" date="2004" name="Genome Res.">
        <title>The status, quality, and expansion of the NIH full-length cDNA project: the Mammalian Gene Collection (MGC).</title>
        <authorList>
            <consortium name="The MGC Project Team"/>
        </authorList>
    </citation>
    <scope>NUCLEOTIDE SEQUENCE [LARGE SCALE MRNA]</scope>
    <source>
        <strain>FVB/N</strain>
        <tissue>Mammary tumor</tissue>
    </source>
</reference>
<reference key="5">
    <citation type="submission" date="2007-03" db="UniProtKB">
        <authorList>
            <person name="Lubec G."/>
            <person name="Klug S."/>
        </authorList>
    </citation>
    <scope>PROTEIN SEQUENCE OF 53-64; 119-133; 147-164 AND 198-224</scope>
    <scope>IDENTIFICATION BY MASS SPECTROMETRY</scope>
    <source>
        <tissue>Hippocampus</tissue>
    </source>
</reference>
<reference key="6">
    <citation type="journal article" date="2009" name="Antioxid. Redox Signal.">
        <title>3-Mercaptopyruvate sulfurtransferase produces hydrogen sulfide and bound sulfane sulfur in the brain.</title>
        <authorList>
            <person name="Shibuya N."/>
            <person name="Tanaka M."/>
            <person name="Yoshida M."/>
            <person name="Ogasawara Y."/>
            <person name="Togawa T."/>
            <person name="Ishii K."/>
            <person name="Kimura H."/>
        </authorList>
    </citation>
    <scope>DEVELOPMENTAL STAGE</scope>
    <scope>CATALYTIC ACTIVITY</scope>
    <scope>FUNCTION</scope>
    <scope>SUBCELLULAR LOCATION</scope>
    <scope>TISSUE SPECIFICITY</scope>
    <scope>ACTIVE SITE</scope>
    <scope>MUTAGENESIS OF ARG-188; ARG-197 AND CYS-248</scope>
</reference>
<reference key="7">
    <citation type="journal article" date="2010" name="Cell">
        <title>A tissue-specific atlas of mouse protein phosphorylation and expression.</title>
        <authorList>
            <person name="Huttlin E.L."/>
            <person name="Jedrychowski M.P."/>
            <person name="Elias J.E."/>
            <person name="Goswami T."/>
            <person name="Rad R."/>
            <person name="Beausoleil S.A."/>
            <person name="Villen J."/>
            <person name="Haas W."/>
            <person name="Sowa M.E."/>
            <person name="Gygi S.P."/>
        </authorList>
    </citation>
    <scope>IDENTIFICATION BY MASS SPECTROMETRY [LARGE SCALE ANALYSIS]</scope>
    <source>
        <tissue>Brain</tissue>
        <tissue>Brown adipose tissue</tissue>
        <tissue>Heart</tissue>
        <tissue>Kidney</tissue>
        <tissue>Liver</tissue>
        <tissue>Lung</tissue>
        <tissue>Pancreas</tissue>
        <tissue>Spleen</tissue>
        <tissue>Testis</tissue>
    </source>
</reference>
<reference key="8">
    <citation type="journal article" date="2011" name="Biochem. J.">
        <title>Thioredoxin and dihydrolipoic acid are required for 3-mercaptopyruvate sulfurtransferase to produce hydrogen sulfide.</title>
        <authorList>
            <person name="Mikami Y."/>
            <person name="Shibuya N."/>
            <person name="Kimura Y."/>
            <person name="Nagahara N."/>
            <person name="Ogasawara Y."/>
            <person name="Kimura H."/>
        </authorList>
    </citation>
    <scope>THIOREDOXIN AND DIHYDROLIPOIC ACID AS REDUCING AGENTS</scope>
</reference>
<reference key="9">
    <citation type="journal article" date="2011" name="J. Biol. Chem.">
        <title>Hydrogen sulfide protects the retina from light-induced degeneration by the modulation of Ca2+ influx.</title>
        <authorList>
            <person name="Mikami Y."/>
            <person name="Shibuya N."/>
            <person name="Kimura Y."/>
            <person name="Nagahara N."/>
            <person name="Yamada M."/>
            <person name="Kimura H."/>
        </authorList>
    </citation>
    <scope>TISSUE SPECIFICITY</scope>
    <scope>FUNCTION</scope>
</reference>
<reference key="10">
    <citation type="journal article" date="2012" name="Commun. Integr. Biol.">
        <title>A mechanism of retinal protection from light-induced degeneration by hydrogen sulfide.</title>
        <authorList>
            <person name="Mikami Y."/>
            <person name="Kimura H."/>
        </authorList>
    </citation>
    <scope>TISSUE SPECIFICITY</scope>
    <scope>FUNCTION</scope>
</reference>
<reference key="11">
    <citation type="journal article" date="2013" name="Mol. Cell">
        <title>SIRT5-mediated lysine desuccinylation impacts diverse metabolic pathways.</title>
        <authorList>
            <person name="Park J."/>
            <person name="Chen Y."/>
            <person name="Tishkoff D.X."/>
            <person name="Peng C."/>
            <person name="Tan M."/>
            <person name="Dai L."/>
            <person name="Xie Z."/>
            <person name="Zhang Y."/>
            <person name="Zwaans B.M."/>
            <person name="Skinner M.E."/>
            <person name="Lombard D.B."/>
            <person name="Zhao Y."/>
        </authorList>
    </citation>
    <scope>SUCCINYLATION [LARGE SCALE ANALYSIS] AT LYS-40; LYS-146 AND LYS-164</scope>
    <scope>IDENTIFICATION BY MASS SPECTROMETRY [LARGE SCALE ANALYSIS]</scope>
    <source>
        <tissue>Liver</tissue>
    </source>
</reference>
<reference key="12">
    <citation type="journal article" date="2013" name="Proc. Natl. Acad. Sci. U.S.A.">
        <title>Label-free quantitative proteomics of the lysine acetylome in mitochondria identifies substrates of SIRT3 in metabolic pathways.</title>
        <authorList>
            <person name="Rardin M.J."/>
            <person name="Newman J.C."/>
            <person name="Held J.M."/>
            <person name="Cusack M.P."/>
            <person name="Sorensen D.J."/>
            <person name="Li B."/>
            <person name="Schilling B."/>
            <person name="Mooney S.D."/>
            <person name="Kahn C.R."/>
            <person name="Verdin E."/>
            <person name="Gibson B.W."/>
        </authorList>
    </citation>
    <scope>ACETYLATION [LARGE SCALE ANALYSIS] AT LYS-40</scope>
    <scope>IDENTIFICATION BY MASS SPECTROMETRY [LARGE SCALE ANALYSIS]</scope>
    <source>
        <tissue>Liver</tissue>
    </source>
</reference>
<reference evidence="11 12" key="13">
    <citation type="journal article" date="2017" name="Sci. Rep.">
        <title>Discovery and Mechanistic Characterization of Selective Inhibitors of H2S-producing Enzyme: 3-Mercaptopyruvate Sulfurtransferase (3MST) Targeting Active-site Cysteine Persulfide.</title>
        <authorList>
            <person name="Hanaoka K."/>
            <person name="Sasakura K."/>
            <person name="Suwanai Y."/>
            <person name="Toma-Fukai S."/>
            <person name="Shimamoto K."/>
            <person name="Takano Y."/>
            <person name="Shibuya N."/>
            <person name="Terai T."/>
            <person name="Komatsu T."/>
            <person name="Ueno T."/>
            <person name="Ogasawara Y."/>
            <person name="Tsuchiya Y."/>
            <person name="Watanabe Y."/>
            <person name="Kimura H."/>
            <person name="Wang C."/>
            <person name="Uchiyama M."/>
            <person name="Kojima H."/>
            <person name="Okabe T."/>
            <person name="Urano Y."/>
            <person name="Shimizu T."/>
            <person name="Nagano T."/>
        </authorList>
    </citation>
    <scope>X-RAY CRYSTALLOGRAPHY (1.20 ANGSTROMS) IN COMPLEX WITH SYNTHETIC INHIBITOR</scope>
    <scope>FUNCTION</scope>
    <scope>CATALYTIC ACTIVITY</scope>
    <scope>ACTIVE SITE</scope>
</reference>
<proteinExistence type="evidence at protein level"/>